<name>Y4LI_SINFN</name>
<geneLocation type="plasmid">
    <name>sym pNGR234a</name>
</geneLocation>
<proteinExistence type="predicted"/>
<gene>
    <name type="ordered locus">NGR_a02660</name>
    <name type="ORF">y4lI</name>
</gene>
<dbReference type="EMBL" id="U00090">
    <property type="protein sequence ID" value="AAB91761.1"/>
    <property type="molecule type" value="Genomic_DNA"/>
</dbReference>
<dbReference type="RefSeq" id="NP_443959.1">
    <property type="nucleotide sequence ID" value="NC_000914.2"/>
</dbReference>
<dbReference type="RefSeq" id="WP_010875291.1">
    <property type="nucleotide sequence ID" value="NC_000914.2"/>
</dbReference>
<dbReference type="SMR" id="P55549"/>
<dbReference type="KEGG" id="rhi:NGR_a02660"/>
<dbReference type="PATRIC" id="fig|394.7.peg.281"/>
<dbReference type="eggNOG" id="ENOG50302K2">
    <property type="taxonomic scope" value="Bacteria"/>
</dbReference>
<dbReference type="HOGENOM" id="CLU_2685291_0_0_5"/>
<dbReference type="OrthoDB" id="7871609at2"/>
<dbReference type="Proteomes" id="UP000001054">
    <property type="component" value="Plasmid pNGR234a"/>
</dbReference>
<accession>P55549</accession>
<sequence length="69" mass="7275">MKKDTKTARSAVTGKFVTQPIGGKKAAKFAQVEGLKMNAASKALSEKLTASGLKGDAYRSEIVKAFKKG</sequence>
<protein>
    <recommendedName>
        <fullName>Uncharacterized protein y4lI</fullName>
    </recommendedName>
</protein>
<reference key="1">
    <citation type="journal article" date="1997" name="Nature">
        <title>Molecular basis of symbiosis between Rhizobium and legumes.</title>
        <authorList>
            <person name="Freiberg C.A."/>
            <person name="Fellay R."/>
            <person name="Bairoch A."/>
            <person name="Broughton W.J."/>
            <person name="Rosenthal A."/>
            <person name="Perret X."/>
        </authorList>
    </citation>
    <scope>NUCLEOTIDE SEQUENCE [LARGE SCALE GENOMIC DNA]</scope>
    <source>
        <strain>NBRC 101917 / NGR234</strain>
    </source>
</reference>
<reference key="2">
    <citation type="journal article" date="2009" name="Appl. Environ. Microbiol.">
        <title>Rhizobium sp. strain NGR234 possesses a remarkable number of secretion systems.</title>
        <authorList>
            <person name="Schmeisser C."/>
            <person name="Liesegang H."/>
            <person name="Krysciak D."/>
            <person name="Bakkou N."/>
            <person name="Le Quere A."/>
            <person name="Wollherr A."/>
            <person name="Heinemeyer I."/>
            <person name="Morgenstern B."/>
            <person name="Pommerening-Roeser A."/>
            <person name="Flores M."/>
            <person name="Palacios R."/>
            <person name="Brenner S."/>
            <person name="Gottschalk G."/>
            <person name="Schmitz R.A."/>
            <person name="Broughton W.J."/>
            <person name="Perret X."/>
            <person name="Strittmatter A.W."/>
            <person name="Streit W.R."/>
        </authorList>
    </citation>
    <scope>NUCLEOTIDE SEQUENCE [LARGE SCALE GENOMIC DNA]</scope>
    <source>
        <strain>NBRC 101917 / NGR234</strain>
    </source>
</reference>
<organism>
    <name type="scientific">Sinorhizobium fredii (strain NBRC 101917 / NGR234)</name>
    <dbReference type="NCBI Taxonomy" id="394"/>
    <lineage>
        <taxon>Bacteria</taxon>
        <taxon>Pseudomonadati</taxon>
        <taxon>Pseudomonadota</taxon>
        <taxon>Alphaproteobacteria</taxon>
        <taxon>Hyphomicrobiales</taxon>
        <taxon>Rhizobiaceae</taxon>
        <taxon>Sinorhizobium/Ensifer group</taxon>
        <taxon>Sinorhizobium</taxon>
    </lineage>
</organism>
<feature type="chain" id="PRO_0000200903" description="Uncharacterized protein y4lI">
    <location>
        <begin position="1"/>
        <end position="69"/>
    </location>
</feature>
<keyword id="KW-0614">Plasmid</keyword>
<keyword id="KW-1185">Reference proteome</keyword>